<gene>
    <name type="ordered locus">MJ0652</name>
</gene>
<organism>
    <name type="scientific">Methanocaldococcus jannaschii (strain ATCC 43067 / DSM 2661 / JAL-1 / JCM 10045 / NBRC 100440)</name>
    <name type="common">Methanococcus jannaschii</name>
    <dbReference type="NCBI Taxonomy" id="243232"/>
    <lineage>
        <taxon>Archaea</taxon>
        <taxon>Methanobacteriati</taxon>
        <taxon>Methanobacteriota</taxon>
        <taxon>Methanomada group</taxon>
        <taxon>Methanococci</taxon>
        <taxon>Methanococcales</taxon>
        <taxon>Methanocaldococcaceae</taxon>
        <taxon>Methanocaldococcus</taxon>
    </lineage>
</organism>
<keyword id="KW-1185">Reference proteome</keyword>
<keyword id="KW-0694">RNA-binding</keyword>
<sequence length="134" mass="15731">MVIFMTEEQKRKLTGKMKRMLRAKAHHLEPVVWVGKEGSEKVIKEVDRQLKERGLIKVKVRKAALLYEDKYEIAEKLAKACDAEVVSVVGHVITLFRPREGWKKYLAKKPKKKVKKDEKIIELFEKFKKKAVKE</sequence>
<proteinExistence type="predicted"/>
<feature type="chain" id="PRO_0000202169" description="Probable RNA-binding protein MJ0652">
    <location>
        <begin position="1"/>
        <end position="134"/>
    </location>
</feature>
<feature type="domain" description="CRM" evidence="1">
    <location>
        <begin position="11"/>
        <end position="108"/>
    </location>
</feature>
<protein>
    <recommendedName>
        <fullName>Probable RNA-binding protein MJ0652</fullName>
    </recommendedName>
</protein>
<accession>Q58068</accession>
<name>Y652_METJA</name>
<dbReference type="EMBL" id="L77117">
    <property type="protein sequence ID" value="AAB98643.1"/>
    <property type="molecule type" value="Genomic_DNA"/>
</dbReference>
<dbReference type="PIR" id="D64381">
    <property type="entry name" value="D64381"/>
</dbReference>
<dbReference type="SMR" id="Q58068"/>
<dbReference type="FunCoup" id="Q58068">
    <property type="interactions" value="2"/>
</dbReference>
<dbReference type="STRING" id="243232.MJ_0652"/>
<dbReference type="PaxDb" id="243232-MJ_0652"/>
<dbReference type="EnsemblBacteria" id="AAB98643">
    <property type="protein sequence ID" value="AAB98643"/>
    <property type="gene ID" value="MJ_0652"/>
</dbReference>
<dbReference type="KEGG" id="mja:MJ_0652"/>
<dbReference type="eggNOG" id="arCOG01346">
    <property type="taxonomic scope" value="Archaea"/>
</dbReference>
<dbReference type="HOGENOM" id="CLU_095994_2_1_2"/>
<dbReference type="InParanoid" id="Q58068"/>
<dbReference type="PhylomeDB" id="Q58068"/>
<dbReference type="Proteomes" id="UP000000805">
    <property type="component" value="Chromosome"/>
</dbReference>
<dbReference type="GO" id="GO:0003723">
    <property type="term" value="F:RNA binding"/>
    <property type="evidence" value="ECO:0007669"/>
    <property type="project" value="UniProtKB-KW"/>
</dbReference>
<dbReference type="Gene3D" id="3.30.110.60">
    <property type="entry name" value="YhbY-like"/>
    <property type="match status" value="1"/>
</dbReference>
<dbReference type="InterPro" id="IPR001890">
    <property type="entry name" value="RNA-binding_CRM"/>
</dbReference>
<dbReference type="InterPro" id="IPR051925">
    <property type="entry name" value="RNA-binding_domain"/>
</dbReference>
<dbReference type="InterPro" id="IPR017924">
    <property type="entry name" value="RNA-binding_YhbY"/>
</dbReference>
<dbReference type="InterPro" id="IPR035920">
    <property type="entry name" value="YhbY-like_sf"/>
</dbReference>
<dbReference type="NCBIfam" id="TIGR00253">
    <property type="entry name" value="RNA_bind_YhbY"/>
    <property type="match status" value="1"/>
</dbReference>
<dbReference type="PANTHER" id="PTHR40065">
    <property type="entry name" value="RNA-BINDING PROTEIN YHBY"/>
    <property type="match status" value="1"/>
</dbReference>
<dbReference type="PANTHER" id="PTHR40065:SF3">
    <property type="entry name" value="RNA-BINDING PROTEIN YHBY"/>
    <property type="match status" value="1"/>
</dbReference>
<dbReference type="Pfam" id="PF01985">
    <property type="entry name" value="CRS1_YhbY"/>
    <property type="match status" value="1"/>
</dbReference>
<dbReference type="SMART" id="SM01103">
    <property type="entry name" value="CRS1_YhbY"/>
    <property type="match status" value="1"/>
</dbReference>
<dbReference type="SUPFAM" id="SSF75471">
    <property type="entry name" value="YhbY-like"/>
    <property type="match status" value="1"/>
</dbReference>
<dbReference type="PROSITE" id="PS51295">
    <property type="entry name" value="CRM"/>
    <property type="match status" value="1"/>
</dbReference>
<reference key="1">
    <citation type="journal article" date="1996" name="Science">
        <title>Complete genome sequence of the methanogenic archaeon, Methanococcus jannaschii.</title>
        <authorList>
            <person name="Bult C.J."/>
            <person name="White O."/>
            <person name="Olsen G.J."/>
            <person name="Zhou L."/>
            <person name="Fleischmann R.D."/>
            <person name="Sutton G.G."/>
            <person name="Blake J.A."/>
            <person name="FitzGerald L.M."/>
            <person name="Clayton R.A."/>
            <person name="Gocayne J.D."/>
            <person name="Kerlavage A.R."/>
            <person name="Dougherty B.A."/>
            <person name="Tomb J.-F."/>
            <person name="Adams M.D."/>
            <person name="Reich C.I."/>
            <person name="Overbeek R."/>
            <person name="Kirkness E.F."/>
            <person name="Weinstock K.G."/>
            <person name="Merrick J.M."/>
            <person name="Glodek A."/>
            <person name="Scott J.L."/>
            <person name="Geoghagen N.S.M."/>
            <person name="Weidman J.F."/>
            <person name="Fuhrmann J.L."/>
            <person name="Nguyen D."/>
            <person name="Utterback T.R."/>
            <person name="Kelley J.M."/>
            <person name="Peterson J.D."/>
            <person name="Sadow P.W."/>
            <person name="Hanna M.C."/>
            <person name="Cotton M.D."/>
            <person name="Roberts K.M."/>
            <person name="Hurst M.A."/>
            <person name="Kaine B.P."/>
            <person name="Borodovsky M."/>
            <person name="Klenk H.-P."/>
            <person name="Fraser C.M."/>
            <person name="Smith H.O."/>
            <person name="Woese C.R."/>
            <person name="Venter J.C."/>
        </authorList>
    </citation>
    <scope>NUCLEOTIDE SEQUENCE [LARGE SCALE GENOMIC DNA]</scope>
    <source>
        <strain>ATCC 43067 / DSM 2661 / JAL-1 / JCM 10045 / NBRC 100440</strain>
    </source>
</reference>
<evidence type="ECO:0000255" key="1">
    <source>
        <dbReference type="PROSITE-ProRule" id="PRU00626"/>
    </source>
</evidence>